<sequence length="359" mass="42777">MAIQNGLRNRILFLVIFMKFYNREKELNYLKNYVQLEPNSILFVYGPKSSGKSTVMLRVIEELSKKDDLVFFYYDLREYATPTKEEFLEIFFEKGDKKYLLNRFEINLKIFKFGIEEKFDFDNIKLNDVFSKMKESINAVIKDGKKPILIIDELQKLKSIYFNGEGKGDKSLLNELFNLFVHLTKVRHLCHVICLTSDTLFIEEIYRNSTLENTSEYYLIDWLRKESIRNILKEEGFSEEEVDYCLKYLSLPYEISQLINNKKLGLSVEQTIKQWINIERDKILYLISTQKEFEMGKLIDALKLFENKIKVDIKEIIRDNLMDEVKFLIKNEILFYDVMNGIIKPTSVKKWYAIKEVIE</sequence>
<dbReference type="EMBL" id="L77117">
    <property type="protein sequence ID" value="AAB99014.1"/>
    <property type="molecule type" value="Genomic_DNA"/>
</dbReference>
<dbReference type="PIR" id="E64425">
    <property type="entry name" value="E64425"/>
</dbReference>
<dbReference type="STRING" id="243232.MJ_1006"/>
<dbReference type="PaxDb" id="243232-MJ_1006"/>
<dbReference type="DNASU" id="1451903"/>
<dbReference type="EnsemblBacteria" id="AAB99014">
    <property type="protein sequence ID" value="AAB99014"/>
    <property type="gene ID" value="MJ_1006"/>
</dbReference>
<dbReference type="KEGG" id="mja:MJ_1006"/>
<dbReference type="eggNOG" id="arCOG03407">
    <property type="taxonomic scope" value="Archaea"/>
</dbReference>
<dbReference type="HOGENOM" id="CLU_068608_0_0_2"/>
<dbReference type="InParanoid" id="Q58412"/>
<dbReference type="PhylomeDB" id="Q58412"/>
<dbReference type="Proteomes" id="UP000000805">
    <property type="component" value="Chromosome"/>
</dbReference>
<dbReference type="GO" id="GO:0005524">
    <property type="term" value="F:ATP binding"/>
    <property type="evidence" value="ECO:0007669"/>
    <property type="project" value="UniProtKB-KW"/>
</dbReference>
<dbReference type="GO" id="GO:0016887">
    <property type="term" value="F:ATP hydrolysis activity"/>
    <property type="evidence" value="ECO:0007669"/>
    <property type="project" value="InterPro"/>
</dbReference>
<dbReference type="CDD" id="cd00009">
    <property type="entry name" value="AAA"/>
    <property type="match status" value="1"/>
</dbReference>
<dbReference type="Gene3D" id="3.40.50.300">
    <property type="entry name" value="P-loop containing nucleotide triphosphate hydrolases"/>
    <property type="match status" value="1"/>
</dbReference>
<dbReference type="Gene3D" id="1.10.10.10">
    <property type="entry name" value="Winged helix-like DNA-binding domain superfamily/Winged helix DNA-binding domain"/>
    <property type="match status" value="1"/>
</dbReference>
<dbReference type="InterPro" id="IPR003593">
    <property type="entry name" value="AAA+_ATPase"/>
</dbReference>
<dbReference type="InterPro" id="IPR051667">
    <property type="entry name" value="Archaeal_ATPase_domain"/>
</dbReference>
<dbReference type="InterPro" id="IPR011579">
    <property type="entry name" value="ATPase_dom"/>
</dbReference>
<dbReference type="InterPro" id="IPR049081">
    <property type="entry name" value="MJ1010-like_2nd"/>
</dbReference>
<dbReference type="InterPro" id="IPR027417">
    <property type="entry name" value="P-loop_NTPase"/>
</dbReference>
<dbReference type="InterPro" id="IPR036388">
    <property type="entry name" value="WH-like_DNA-bd_sf"/>
</dbReference>
<dbReference type="PANTHER" id="PTHR37096:SF1">
    <property type="entry name" value="AAA+ ATPASE DOMAIN-CONTAINING PROTEIN"/>
    <property type="match status" value="1"/>
</dbReference>
<dbReference type="PANTHER" id="PTHR37096">
    <property type="entry name" value="YALI0E33429P"/>
    <property type="match status" value="1"/>
</dbReference>
<dbReference type="Pfam" id="PF01637">
    <property type="entry name" value="ATPase_2"/>
    <property type="match status" value="1"/>
</dbReference>
<dbReference type="Pfam" id="PF21690">
    <property type="entry name" value="MJ1010-like_2nd"/>
    <property type="match status" value="1"/>
</dbReference>
<dbReference type="SMART" id="SM00382">
    <property type="entry name" value="AAA"/>
    <property type="match status" value="1"/>
</dbReference>
<dbReference type="SUPFAM" id="SSF52540">
    <property type="entry name" value="P-loop containing nucleoside triphosphate hydrolases"/>
    <property type="match status" value="1"/>
</dbReference>
<keyword id="KW-0067">ATP-binding</keyword>
<keyword id="KW-0547">Nucleotide-binding</keyword>
<keyword id="KW-1185">Reference proteome</keyword>
<proteinExistence type="inferred from homology"/>
<name>Y1006_METJA</name>
<evidence type="ECO:0000255" key="1"/>
<evidence type="ECO:0000305" key="2"/>
<accession>Q58412</accession>
<organism>
    <name type="scientific">Methanocaldococcus jannaschii (strain ATCC 43067 / DSM 2661 / JAL-1 / JCM 10045 / NBRC 100440)</name>
    <name type="common">Methanococcus jannaschii</name>
    <dbReference type="NCBI Taxonomy" id="243232"/>
    <lineage>
        <taxon>Archaea</taxon>
        <taxon>Methanobacteriati</taxon>
        <taxon>Methanobacteriota</taxon>
        <taxon>Methanomada group</taxon>
        <taxon>Methanococci</taxon>
        <taxon>Methanococcales</taxon>
        <taxon>Methanocaldococcaceae</taxon>
        <taxon>Methanocaldococcus</taxon>
    </lineage>
</organism>
<comment type="similarity">
    <text evidence="2">Belongs to the archaeal ATPase family.</text>
</comment>
<gene>
    <name type="ordered locus">MJ1006</name>
</gene>
<reference key="1">
    <citation type="journal article" date="1996" name="Science">
        <title>Complete genome sequence of the methanogenic archaeon, Methanococcus jannaschii.</title>
        <authorList>
            <person name="Bult C.J."/>
            <person name="White O."/>
            <person name="Olsen G.J."/>
            <person name="Zhou L."/>
            <person name="Fleischmann R.D."/>
            <person name="Sutton G.G."/>
            <person name="Blake J.A."/>
            <person name="FitzGerald L.M."/>
            <person name="Clayton R.A."/>
            <person name="Gocayne J.D."/>
            <person name="Kerlavage A.R."/>
            <person name="Dougherty B.A."/>
            <person name="Tomb J.-F."/>
            <person name="Adams M.D."/>
            <person name="Reich C.I."/>
            <person name="Overbeek R."/>
            <person name="Kirkness E.F."/>
            <person name="Weinstock K.G."/>
            <person name="Merrick J.M."/>
            <person name="Glodek A."/>
            <person name="Scott J.L."/>
            <person name="Geoghagen N.S.M."/>
            <person name="Weidman J.F."/>
            <person name="Fuhrmann J.L."/>
            <person name="Nguyen D."/>
            <person name="Utterback T.R."/>
            <person name="Kelley J.M."/>
            <person name="Peterson J.D."/>
            <person name="Sadow P.W."/>
            <person name="Hanna M.C."/>
            <person name="Cotton M.D."/>
            <person name="Roberts K.M."/>
            <person name="Hurst M.A."/>
            <person name="Kaine B.P."/>
            <person name="Borodovsky M."/>
            <person name="Klenk H.-P."/>
            <person name="Fraser C.M."/>
            <person name="Smith H.O."/>
            <person name="Woese C.R."/>
            <person name="Venter J.C."/>
        </authorList>
    </citation>
    <scope>NUCLEOTIDE SEQUENCE [LARGE SCALE GENOMIC DNA]</scope>
    <source>
        <strain>ATCC 43067 / DSM 2661 / JAL-1 / JCM 10045 / NBRC 100440</strain>
    </source>
</reference>
<reference key="2">
    <citation type="journal article" date="1997" name="Science">
        <title>Evidence for a family of archaeal ATPases.</title>
        <authorList>
            <person name="Koonin E.V."/>
        </authorList>
    </citation>
    <scope>SIMILARITY</scope>
</reference>
<feature type="chain" id="PRO_0000184672" description="Uncharacterized ATP-binding protein MJ1006">
    <location>
        <begin position="1"/>
        <end position="359"/>
    </location>
</feature>
<feature type="binding site" evidence="1">
    <location>
        <begin position="46"/>
        <end position="53"/>
    </location>
    <ligand>
        <name>ATP</name>
        <dbReference type="ChEBI" id="CHEBI:30616"/>
    </ligand>
</feature>
<protein>
    <recommendedName>
        <fullName>Uncharacterized ATP-binding protein MJ1006</fullName>
    </recommendedName>
</protein>